<keyword id="KW-0066">ATP synthesis</keyword>
<keyword id="KW-1003">Cell membrane</keyword>
<keyword id="KW-0138">CF(0)</keyword>
<keyword id="KW-0375">Hydrogen ion transport</keyword>
<keyword id="KW-0406">Ion transport</keyword>
<keyword id="KW-0446">Lipid-binding</keyword>
<keyword id="KW-0472">Membrane</keyword>
<keyword id="KW-0812">Transmembrane</keyword>
<keyword id="KW-1133">Transmembrane helix</keyword>
<keyword id="KW-0813">Transport</keyword>
<organism>
    <name type="scientific">Clostridium botulinum (strain Okra / Type B1)</name>
    <dbReference type="NCBI Taxonomy" id="498213"/>
    <lineage>
        <taxon>Bacteria</taxon>
        <taxon>Bacillati</taxon>
        <taxon>Bacillota</taxon>
        <taxon>Clostridia</taxon>
        <taxon>Eubacteriales</taxon>
        <taxon>Clostridiaceae</taxon>
        <taxon>Clostridium</taxon>
    </lineage>
</organism>
<evidence type="ECO:0000255" key="1">
    <source>
        <dbReference type="HAMAP-Rule" id="MF_01396"/>
    </source>
</evidence>
<protein>
    <recommendedName>
        <fullName evidence="1">ATP synthase subunit c</fullName>
    </recommendedName>
    <alternativeName>
        <fullName evidence="1">ATP synthase F(0) sector subunit c</fullName>
    </alternativeName>
    <alternativeName>
        <fullName evidence="1">F-type ATPase subunit c</fullName>
        <shortName evidence="1">F-ATPase subunit c</shortName>
    </alternativeName>
    <alternativeName>
        <fullName evidence="1">Lipid-binding protein</fullName>
    </alternativeName>
</protein>
<feature type="chain" id="PRO_0000365870" description="ATP synthase subunit c">
    <location>
        <begin position="1"/>
        <end position="79"/>
    </location>
</feature>
<feature type="transmembrane region" description="Helical" evidence="1">
    <location>
        <begin position="7"/>
        <end position="27"/>
    </location>
</feature>
<feature type="transmembrane region" description="Helical" evidence="1">
    <location>
        <begin position="56"/>
        <end position="76"/>
    </location>
</feature>
<feature type="site" description="Reversibly protonated during proton transport" evidence="1">
    <location>
        <position position="62"/>
    </location>
</feature>
<accession>B1IE29</accession>
<proteinExistence type="inferred from homology"/>
<gene>
    <name evidence="1" type="primary">atpE</name>
    <name type="ordered locus">CLD_0634</name>
</gene>
<name>ATPL_CLOBK</name>
<comment type="function">
    <text evidence="1">F(1)F(0) ATP synthase produces ATP from ADP in the presence of a proton or sodium gradient. F-type ATPases consist of two structural domains, F(1) containing the extramembraneous catalytic core and F(0) containing the membrane proton channel, linked together by a central stalk and a peripheral stalk. During catalysis, ATP synthesis in the catalytic domain of F(1) is coupled via a rotary mechanism of the central stalk subunits to proton translocation.</text>
</comment>
<comment type="function">
    <text evidence="1">Key component of the F(0) channel; it plays a direct role in translocation across the membrane. A homomeric c-ring of between 10-14 subunits forms the central stalk rotor element with the F(1) delta and epsilon subunits.</text>
</comment>
<comment type="subunit">
    <text evidence="1">F-type ATPases have 2 components, F(1) - the catalytic core - and F(0) - the membrane proton channel. F(1) has five subunits: alpha(3), beta(3), gamma(1), delta(1), epsilon(1). F(0) has three main subunits: a(1), b(2) and c(10-14). The alpha and beta chains form an alternating ring which encloses part of the gamma chain. F(1) is attached to F(0) by a central stalk formed by the gamma and epsilon chains, while a peripheral stalk is formed by the delta and b chains.</text>
</comment>
<comment type="subcellular location">
    <subcellularLocation>
        <location evidence="1">Cell membrane</location>
        <topology evidence="1">Multi-pass membrane protein</topology>
    </subcellularLocation>
</comment>
<comment type="similarity">
    <text evidence="1">Belongs to the ATPase C chain family.</text>
</comment>
<sequence>MDPKAFVSGMAALGAGIAALACIGAGIGTGNATGKAVEGVSRQPEASGKIMSTLVIGSAFSEATAIYGLIIALFLIFKI</sequence>
<dbReference type="EMBL" id="CP000939">
    <property type="protein sequence ID" value="ACA45608.1"/>
    <property type="molecule type" value="Genomic_DNA"/>
</dbReference>
<dbReference type="RefSeq" id="WP_003356112.1">
    <property type="nucleotide sequence ID" value="NC_010516.1"/>
</dbReference>
<dbReference type="SMR" id="B1IE29"/>
<dbReference type="GeneID" id="92936949"/>
<dbReference type="KEGG" id="cbb:CLD_0634"/>
<dbReference type="HOGENOM" id="CLU_148047_2_0_9"/>
<dbReference type="Proteomes" id="UP000008541">
    <property type="component" value="Chromosome"/>
</dbReference>
<dbReference type="GO" id="GO:0005886">
    <property type="term" value="C:plasma membrane"/>
    <property type="evidence" value="ECO:0007669"/>
    <property type="project" value="UniProtKB-SubCell"/>
</dbReference>
<dbReference type="GO" id="GO:0045259">
    <property type="term" value="C:proton-transporting ATP synthase complex"/>
    <property type="evidence" value="ECO:0007669"/>
    <property type="project" value="UniProtKB-KW"/>
</dbReference>
<dbReference type="GO" id="GO:0033177">
    <property type="term" value="C:proton-transporting two-sector ATPase complex, proton-transporting domain"/>
    <property type="evidence" value="ECO:0007669"/>
    <property type="project" value="InterPro"/>
</dbReference>
<dbReference type="GO" id="GO:0008289">
    <property type="term" value="F:lipid binding"/>
    <property type="evidence" value="ECO:0007669"/>
    <property type="project" value="UniProtKB-KW"/>
</dbReference>
<dbReference type="GO" id="GO:0046933">
    <property type="term" value="F:proton-transporting ATP synthase activity, rotational mechanism"/>
    <property type="evidence" value="ECO:0007669"/>
    <property type="project" value="UniProtKB-UniRule"/>
</dbReference>
<dbReference type="CDD" id="cd18184">
    <property type="entry name" value="ATP-synt_Fo_c_NaATPase"/>
    <property type="match status" value="1"/>
</dbReference>
<dbReference type="FunFam" id="1.20.20.10:FF:000001">
    <property type="entry name" value="ATP synthase subunit c, chloroplastic"/>
    <property type="match status" value="1"/>
</dbReference>
<dbReference type="Gene3D" id="1.20.20.10">
    <property type="entry name" value="F1F0 ATP synthase subunit C"/>
    <property type="match status" value="1"/>
</dbReference>
<dbReference type="HAMAP" id="MF_01396">
    <property type="entry name" value="ATP_synth_c_bact"/>
    <property type="match status" value="1"/>
</dbReference>
<dbReference type="InterPro" id="IPR005953">
    <property type="entry name" value="ATP_synth_csu_bac/chlpt"/>
</dbReference>
<dbReference type="InterPro" id="IPR000454">
    <property type="entry name" value="ATP_synth_F0_csu"/>
</dbReference>
<dbReference type="InterPro" id="IPR020537">
    <property type="entry name" value="ATP_synth_F0_csu_DDCD_BS"/>
</dbReference>
<dbReference type="InterPro" id="IPR038662">
    <property type="entry name" value="ATP_synth_F0_csu_sf"/>
</dbReference>
<dbReference type="InterPro" id="IPR002379">
    <property type="entry name" value="ATPase_proteolipid_c-like_dom"/>
</dbReference>
<dbReference type="InterPro" id="IPR035921">
    <property type="entry name" value="F/V-ATP_Csub_sf"/>
</dbReference>
<dbReference type="NCBIfam" id="TIGR01260">
    <property type="entry name" value="ATP_synt_c"/>
    <property type="match status" value="1"/>
</dbReference>
<dbReference type="PANTHER" id="PTHR10031">
    <property type="entry name" value="ATP SYNTHASE LIPID-BINDING PROTEIN, MITOCHONDRIAL"/>
    <property type="match status" value="1"/>
</dbReference>
<dbReference type="PANTHER" id="PTHR10031:SF0">
    <property type="entry name" value="ATPASE PROTEIN 9"/>
    <property type="match status" value="1"/>
</dbReference>
<dbReference type="Pfam" id="PF00137">
    <property type="entry name" value="ATP-synt_C"/>
    <property type="match status" value="1"/>
</dbReference>
<dbReference type="PRINTS" id="PR00124">
    <property type="entry name" value="ATPASEC"/>
</dbReference>
<dbReference type="SUPFAM" id="SSF81333">
    <property type="entry name" value="F1F0 ATP synthase subunit C"/>
    <property type="match status" value="1"/>
</dbReference>
<dbReference type="PROSITE" id="PS00605">
    <property type="entry name" value="ATPASE_C"/>
    <property type="match status" value="1"/>
</dbReference>
<reference key="1">
    <citation type="journal article" date="2007" name="PLoS ONE">
        <title>Analysis of the neurotoxin complex genes in Clostridium botulinum A1-A4 and B1 strains: BoNT/A3, /Ba4 and /B1 clusters are located within plasmids.</title>
        <authorList>
            <person name="Smith T.J."/>
            <person name="Hill K.K."/>
            <person name="Foley B.T."/>
            <person name="Detter J.C."/>
            <person name="Munk A.C."/>
            <person name="Bruce D.C."/>
            <person name="Doggett N.A."/>
            <person name="Smith L.A."/>
            <person name="Marks J.D."/>
            <person name="Xie G."/>
            <person name="Brettin T.S."/>
        </authorList>
    </citation>
    <scope>NUCLEOTIDE SEQUENCE [LARGE SCALE GENOMIC DNA]</scope>
    <source>
        <strain>Okra / Type B1</strain>
    </source>
</reference>